<proteinExistence type="evidence at protein level"/>
<feature type="chain" id="PRO_0000431519" description="Transcription factor SPT20">
    <location>
        <begin position="1"/>
        <end position="751"/>
    </location>
</feature>
<feature type="region of interest" description="Disordered" evidence="2">
    <location>
        <begin position="1"/>
        <end position="42"/>
    </location>
</feature>
<feature type="region of interest" description="Disordered" evidence="2">
    <location>
        <begin position="164"/>
        <end position="183"/>
    </location>
</feature>
<feature type="region of interest" description="Disordered" evidence="2">
    <location>
        <begin position="328"/>
        <end position="411"/>
    </location>
</feature>
<feature type="region of interest" description="Disordered" evidence="2">
    <location>
        <begin position="445"/>
        <end position="597"/>
    </location>
</feature>
<feature type="region of interest" description="Disordered" evidence="2">
    <location>
        <begin position="681"/>
        <end position="751"/>
    </location>
</feature>
<feature type="compositionally biased region" description="Polar residues" evidence="2">
    <location>
        <begin position="7"/>
        <end position="38"/>
    </location>
</feature>
<feature type="compositionally biased region" description="Low complexity" evidence="2">
    <location>
        <begin position="331"/>
        <end position="374"/>
    </location>
</feature>
<feature type="compositionally biased region" description="Polar residues" evidence="2">
    <location>
        <begin position="387"/>
        <end position="397"/>
    </location>
</feature>
<feature type="compositionally biased region" description="Polar residues" evidence="2">
    <location>
        <begin position="445"/>
        <end position="468"/>
    </location>
</feature>
<feature type="compositionally biased region" description="Polar residues" evidence="2">
    <location>
        <begin position="475"/>
        <end position="484"/>
    </location>
</feature>
<feature type="compositionally biased region" description="Low complexity" evidence="2">
    <location>
        <begin position="496"/>
        <end position="516"/>
    </location>
</feature>
<feature type="compositionally biased region" description="Polar residues" evidence="2">
    <location>
        <begin position="517"/>
        <end position="553"/>
    </location>
</feature>
<feature type="compositionally biased region" description="Low complexity" evidence="2">
    <location>
        <begin position="554"/>
        <end position="597"/>
    </location>
</feature>
<feature type="compositionally biased region" description="Low complexity" evidence="2">
    <location>
        <begin position="681"/>
        <end position="715"/>
    </location>
</feature>
<feature type="compositionally biased region" description="Polar residues" evidence="2">
    <location>
        <begin position="716"/>
        <end position="734"/>
    </location>
</feature>
<feature type="compositionally biased region" description="Basic residues" evidence="2">
    <location>
        <begin position="737"/>
        <end position="751"/>
    </location>
</feature>
<dbReference type="EMBL" id="CP017623">
    <property type="protein sequence ID" value="AOW26212.1"/>
    <property type="molecule type" value="Genomic_DNA"/>
</dbReference>
<dbReference type="RefSeq" id="XP_715857.2">
    <property type="nucleotide sequence ID" value="XM_710764.2"/>
</dbReference>
<dbReference type="STRING" id="237561.Q5A2B9"/>
<dbReference type="EnsemblFungi" id="C1_05430W_A-T">
    <property type="protein sequence ID" value="C1_05430W_A-T-p1"/>
    <property type="gene ID" value="C1_05430W_A"/>
</dbReference>
<dbReference type="GeneID" id="3642492"/>
<dbReference type="KEGG" id="cal:CAALFM_C105430WA"/>
<dbReference type="CGD" id="CAL0000196043">
    <property type="gene designation" value="SPT20"/>
</dbReference>
<dbReference type="VEuPathDB" id="FungiDB:C1_05430W_A"/>
<dbReference type="eggNOG" id="ENOG502QS30">
    <property type="taxonomic scope" value="Eukaryota"/>
</dbReference>
<dbReference type="HOGENOM" id="CLU_377649_0_0_1"/>
<dbReference type="InParanoid" id="Q5A2B9"/>
<dbReference type="OMA" id="HNYNEHI"/>
<dbReference type="OrthoDB" id="1932706at2759"/>
<dbReference type="PHI-base" id="PHI:4208"/>
<dbReference type="PRO" id="PR:Q5A2B9"/>
<dbReference type="Proteomes" id="UP000000559">
    <property type="component" value="Chromosome 1"/>
</dbReference>
<dbReference type="GO" id="GO:0005634">
    <property type="term" value="C:nucleus"/>
    <property type="evidence" value="ECO:0007669"/>
    <property type="project" value="UniProtKB-SubCell"/>
</dbReference>
<dbReference type="GO" id="GO:0000124">
    <property type="term" value="C:SAGA complex"/>
    <property type="evidence" value="ECO:0000318"/>
    <property type="project" value="GO_Central"/>
</dbReference>
<dbReference type="GO" id="GO:0003712">
    <property type="term" value="F:transcription coregulator activity"/>
    <property type="evidence" value="ECO:0000318"/>
    <property type="project" value="GO_Central"/>
</dbReference>
<dbReference type="GO" id="GO:0006357">
    <property type="term" value="P:regulation of transcription by RNA polymerase II"/>
    <property type="evidence" value="ECO:0000318"/>
    <property type="project" value="GO_Central"/>
</dbReference>
<dbReference type="InterPro" id="IPR021950">
    <property type="entry name" value="Spt20"/>
</dbReference>
<dbReference type="InterPro" id="IPR046468">
    <property type="entry name" value="Spt20-like_SEP"/>
</dbReference>
<dbReference type="PANTHER" id="PTHR13526">
    <property type="entry name" value="TRANSCRIPTION FACTOR SPT20 HOMOLOG"/>
    <property type="match status" value="1"/>
</dbReference>
<dbReference type="PANTHER" id="PTHR13526:SF8">
    <property type="entry name" value="TRANSCRIPTION FACTOR SPT20 HOMOLOG"/>
    <property type="match status" value="1"/>
</dbReference>
<dbReference type="Pfam" id="PF12090">
    <property type="entry name" value="Spt20_SEP"/>
    <property type="match status" value="1"/>
</dbReference>
<protein>
    <recommendedName>
        <fullName evidence="7">Transcription factor SPT20</fullName>
    </recommendedName>
</protein>
<reference key="1">
    <citation type="journal article" date="2004" name="Proc. Natl. Acad. Sci. U.S.A.">
        <title>The diploid genome sequence of Candida albicans.</title>
        <authorList>
            <person name="Jones T."/>
            <person name="Federspiel N.A."/>
            <person name="Chibana H."/>
            <person name="Dungan J."/>
            <person name="Kalman S."/>
            <person name="Magee B.B."/>
            <person name="Newport G."/>
            <person name="Thorstenson Y.R."/>
            <person name="Agabian N."/>
            <person name="Magee P.T."/>
            <person name="Davis R.W."/>
            <person name="Scherer S."/>
        </authorList>
    </citation>
    <scope>NUCLEOTIDE SEQUENCE [LARGE SCALE GENOMIC DNA]</scope>
    <source>
        <strain>SC5314 / ATCC MYA-2876</strain>
    </source>
</reference>
<reference key="2">
    <citation type="journal article" date="2007" name="Genome Biol.">
        <title>Assembly of the Candida albicans genome into sixteen supercontigs aligned on the eight chromosomes.</title>
        <authorList>
            <person name="van het Hoog M."/>
            <person name="Rast T.J."/>
            <person name="Martchenko M."/>
            <person name="Grindle S."/>
            <person name="Dignard D."/>
            <person name="Hogues H."/>
            <person name="Cuomo C."/>
            <person name="Berriman M."/>
            <person name="Scherer S."/>
            <person name="Magee B.B."/>
            <person name="Whiteway M."/>
            <person name="Chibana H."/>
            <person name="Nantel A."/>
            <person name="Magee P.T."/>
        </authorList>
    </citation>
    <scope>GENOME REANNOTATION</scope>
    <source>
        <strain>SC5314 / ATCC MYA-2876</strain>
    </source>
</reference>
<reference key="3">
    <citation type="journal article" date="2013" name="Genome Biol.">
        <title>Assembly of a phased diploid Candida albicans genome facilitates allele-specific measurements and provides a simple model for repeat and indel structure.</title>
        <authorList>
            <person name="Muzzey D."/>
            <person name="Schwartz K."/>
            <person name="Weissman J.S."/>
            <person name="Sherlock G."/>
        </authorList>
    </citation>
    <scope>NUCLEOTIDE SEQUENCE [LARGE SCALE GENOMIC DNA]</scope>
    <scope>GENOME REANNOTATION</scope>
    <source>
        <strain>SC5314 / ATCC MYA-2876</strain>
    </source>
</reference>
<reference key="4">
    <citation type="journal article" date="2005" name="Antimicrob. Agents Chemother.">
        <title>Genome-wide expression profiling of the response to azole, polyene, echinocandin, and pyrimidine antifungal agents in Candida albicans.</title>
        <authorList>
            <person name="Liu T.T."/>
            <person name="Lee R.E."/>
            <person name="Barker K.S."/>
            <person name="Lee R.E."/>
            <person name="Wei L."/>
            <person name="Homayouni R."/>
            <person name="Rogers P.D."/>
        </authorList>
    </citation>
    <scope>INDUCTION</scope>
</reference>
<reference key="5">
    <citation type="journal article" date="2005" name="FEMS Microbiol. Lett.">
        <title>DNA array analysis of Candida albicans gene expression in response to adherence to polystyrene.</title>
        <authorList>
            <person name="Marchais V."/>
            <person name="Kempf M."/>
            <person name="Licznar P."/>
            <person name="Lefrancois C."/>
            <person name="Bouchara J.P."/>
            <person name="Robert R."/>
            <person name="Cottin J."/>
        </authorList>
    </citation>
    <scope>INDUCTION</scope>
</reference>
<reference key="6">
    <citation type="journal article" date="2009" name="Mol. Biol. Cell">
        <title>Genome-wide mapping of the coactivator Ada2p yields insight into the functional roles of SAGA/ADA complex in Candida albicans.</title>
        <authorList>
            <person name="Sellam A."/>
            <person name="Askew C."/>
            <person name="Epp E."/>
            <person name="Lavoie H."/>
            <person name="Whiteway M."/>
            <person name="Nantel A."/>
        </authorList>
    </citation>
    <scope>IDENTIFICATION IN THE SAGA COMPLEX</scope>
</reference>
<reference key="7">
    <citation type="journal article" date="2014" name="PLoS ONE">
        <title>The role of Candida albicans SPT20 in filamentation, biofilm formation and pathogenesis.</title>
        <authorList>
            <person name="Tan X."/>
            <person name="Fuchs B.B."/>
            <person name="Wang Y."/>
            <person name="Chen W."/>
            <person name="Yuen G.J."/>
            <person name="Chen R.B."/>
            <person name="Jayamani E."/>
            <person name="Anastassopoulou C."/>
            <person name="Pukkila-Worley R."/>
            <person name="Coleman J.J."/>
            <person name="Mylonakis E."/>
        </authorList>
    </citation>
    <scope>DISRUPTION PHENOTYPE</scope>
    <scope>FUNCTION</scope>
</reference>
<sequence length="751" mass="83963">MIKSEVLSGSASKTVGNSISNGTTVSTQNQGGKQNLIRQQQQQQQQQQQQQQQQQQQQLKHRTALQNYHFASTSEEILKKYSKYPASMSLHIFETHYRFNNSQDSQVIPKDSPMIKDFMKHVLKEQIPVEMCELIKDFAIRPYDGCIILQVYDHRNMVKTAVLQNRSTSSPSKDQDKKQQMVVSKPRTYRTLLRPTSLSIYYDLLYHTDSALHRFTDYLSLQMESEILTATNRELNLSVPLNPYNYDHLRPEPEPSGDMSQNSDEEIDQVKFQHRDAVEQPRRKIHQDEMVLHKSSEYEELMLLLSNKHKRPDDCSDKRLVVVSTSALPGSSLTGTSNTSTGTAAATPTPTSTTASAASQSSKQTTADGASTTDTKGKKGDKANGTSANQASASPTSVHPPIPTIPQNSVRATGQFMRLRLIEEIRKKRELEKLQQEAKIQAQANAIQSDSVPPSQQLAPQNTINSPVVTEPTKRSSPAAQNQPAPKRAKKETKKQLQAKAQAQAKAQAQAKAKVQTETPGPTPVQGQNSLSGPSVVNGSNVTSTANTPTMNNQSSLQQPSQASQPQIGSLNNNQQSQSQQQQQKNPQQTLQQQQQQQIFQNSLTPEEQKVYKQIQQNMATLAMMGQSGVTPTGQQLTPQQKQQAIQQAKNLQQQLFQRFPLYFQRMKQLQLIHQKRRLQQQQQQQQQQQQQQASNSSGGNQNNSSNQAAPQTQQFNQALPSTSEQSKPVTTSPEVKKKRTYQKKKNAPAN</sequence>
<keyword id="KW-0539">Nucleus</keyword>
<keyword id="KW-1185">Reference proteome</keyword>
<keyword id="KW-0804">Transcription</keyword>
<keyword id="KW-0805">Transcription regulation</keyword>
<keyword id="KW-0843">Virulence</keyword>
<evidence type="ECO:0000250" key="1">
    <source>
        <dbReference type="UniProtKB" id="P50875"/>
    </source>
</evidence>
<evidence type="ECO:0000256" key="2">
    <source>
        <dbReference type="SAM" id="MobiDB-lite"/>
    </source>
</evidence>
<evidence type="ECO:0000269" key="3">
    <source>
    </source>
</evidence>
<evidence type="ECO:0000269" key="4">
    <source>
    </source>
</evidence>
<evidence type="ECO:0000269" key="5">
    <source>
    </source>
</evidence>
<evidence type="ECO:0000303" key="6">
    <source>
    </source>
</evidence>
<evidence type="ECO:0000305" key="7"/>
<organism>
    <name type="scientific">Candida albicans (strain SC5314 / ATCC MYA-2876)</name>
    <name type="common">Yeast</name>
    <dbReference type="NCBI Taxonomy" id="237561"/>
    <lineage>
        <taxon>Eukaryota</taxon>
        <taxon>Fungi</taxon>
        <taxon>Dikarya</taxon>
        <taxon>Ascomycota</taxon>
        <taxon>Saccharomycotina</taxon>
        <taxon>Pichiomycetes</taxon>
        <taxon>Debaryomycetaceae</taxon>
        <taxon>Candida/Lodderomyces clade</taxon>
        <taxon>Candida</taxon>
    </lineage>
</organism>
<gene>
    <name type="primary">SPT20</name>
    <name type="ordered locus">CAALFM_C105430WA</name>
    <name type="ORF">CaO19.422</name>
    <name type="ORF">CaO19.8052</name>
</gene>
<name>SPT20_CANAL</name>
<comment type="function">
    <text evidence="1 5 6">Component of the transcription regulatory histone acetylation (HAT) complex SAGA. SAGA is involved in RNA polymerase II-dependent transcriptional regulation of approximately 10% of yeast genes. At the promoters, SAGA is required for recruitment of the basal transcription machinery. It influences RNA polymerase II transcriptional activity through different activities such as TBP interaction and promoter selectivity, interaction with transcription activators, and chromatin modification through histone acetylation and deubiquitination. SAGA acetylates nucleosomal histone H3 to some extent (to form H3K9ac, H3K14ac, H3K18ac and H3K23ac). SAGA interacts with DNA via upstream activating sequences (UASs) (By similarity). SPT20 plays a role in nuclear division and regulates hyphal and biofilm formation, which are crucial steps for virulence.</text>
</comment>
<comment type="subunit">
    <text evidence="1 6">Component of the SAGA complex.</text>
</comment>
<comment type="subcellular location">
    <subcellularLocation>
        <location evidence="7">Nucleus</location>
    </subcellularLocation>
</comment>
<comment type="induction">
    <text evidence="3 4">Expression is down-regulated by flucytosine and upon adherence to polystyrene.</text>
</comment>
<comment type="disruption phenotype">
    <text evidence="5">Impairs proper nucleus dividing and distribution to the dividing cells. Leads to hypersensitivity to amphotericin B, fluconazole and caspofunginreduced; and to reduced virulence in the C.elegans and the G.mellonella infection models.</text>
</comment>
<comment type="similarity">
    <text evidence="7">Belongs to the SPT20 family.</text>
</comment>
<accession>Q5A2B9</accession>
<accession>A0A1D8PDK3</accession>
<accession>Q5A2H1</accession>